<proteinExistence type="inferred from homology"/>
<evidence type="ECO:0000255" key="1">
    <source>
        <dbReference type="HAMAP-Rule" id="MF_01270"/>
    </source>
</evidence>
<comment type="function">
    <text evidence="1">Catalyzes the specific phosphorylation of 1,6-anhydro-N-acetylmuramic acid (anhMurNAc) with the simultaneous cleavage of the 1,6-anhydro ring, generating MurNAc-6-P. Is required for the utilization of anhMurNAc either imported from the medium or derived from its own cell wall murein, and thus plays a role in cell wall recycling.</text>
</comment>
<comment type="catalytic activity">
    <reaction evidence="1">
        <text>1,6-anhydro-N-acetyl-beta-muramate + ATP + H2O = N-acetyl-D-muramate 6-phosphate + ADP + H(+)</text>
        <dbReference type="Rhea" id="RHEA:24952"/>
        <dbReference type="ChEBI" id="CHEBI:15377"/>
        <dbReference type="ChEBI" id="CHEBI:15378"/>
        <dbReference type="ChEBI" id="CHEBI:30616"/>
        <dbReference type="ChEBI" id="CHEBI:58690"/>
        <dbReference type="ChEBI" id="CHEBI:58722"/>
        <dbReference type="ChEBI" id="CHEBI:456216"/>
        <dbReference type="EC" id="2.7.1.170"/>
    </reaction>
</comment>
<comment type="pathway">
    <text evidence="1">Amino-sugar metabolism; 1,6-anhydro-N-acetylmuramate degradation.</text>
</comment>
<comment type="pathway">
    <text evidence="1">Cell wall biogenesis; peptidoglycan recycling.</text>
</comment>
<comment type="similarity">
    <text evidence="1">Belongs to the anhydro-N-acetylmuramic acid kinase family.</text>
</comment>
<keyword id="KW-0067">ATP-binding</keyword>
<keyword id="KW-0119">Carbohydrate metabolism</keyword>
<keyword id="KW-0418">Kinase</keyword>
<keyword id="KW-0547">Nucleotide-binding</keyword>
<keyword id="KW-1185">Reference proteome</keyword>
<keyword id="KW-0808">Transferase</keyword>
<reference key="1">
    <citation type="journal article" date="2002" name="DNA Res.">
        <title>Complete genomic sequence of nitrogen-fixing symbiotic bacterium Bradyrhizobium japonicum USDA110.</title>
        <authorList>
            <person name="Kaneko T."/>
            <person name="Nakamura Y."/>
            <person name="Sato S."/>
            <person name="Minamisawa K."/>
            <person name="Uchiumi T."/>
            <person name="Sasamoto S."/>
            <person name="Watanabe A."/>
            <person name="Idesawa K."/>
            <person name="Iriguchi M."/>
            <person name="Kawashima K."/>
            <person name="Kohara M."/>
            <person name="Matsumoto M."/>
            <person name="Shimpo S."/>
            <person name="Tsuruoka H."/>
            <person name="Wada T."/>
            <person name="Yamada M."/>
            <person name="Tabata S."/>
        </authorList>
    </citation>
    <scope>NUCLEOTIDE SEQUENCE [LARGE SCALE GENOMIC DNA]</scope>
    <source>
        <strain>JCM 10833 / BCRC 13528 / IAM 13628 / NBRC 14792 / USDA 110</strain>
    </source>
</reference>
<name>ANMK_BRADU</name>
<sequence length="367" mass="38987">MMLTALGLMSGTSLDGVDVALIETDGKQVKAFGPSGYRPYSPVERNLLRQALSEAVHLTRRDARPGILAEAERAVTQAHAEAVAAFVAQNRMRPEDIDIVGFHGQTVLHRPEKRLTVQIGDAPALARAIHIPVMHDFRAADVEAGGQGAPFVPVYHRALAQSLEREGPIVVVNIGGVSNITYIDGNDTLIACDTGPGNALLDDFMYRTMNQAFDTEGKFAALGTADEAWIARALELPFFALPPPKSLDRNDFAALKLGDVPPAVGAATLTAFTAAAIARIIPLLPRRPRSWIVCGGGARNLTMLRMLRERVGSATVEAAEALGWASDAIEAQAFGFLAARGLKGLPLSYPATTGVPMPMTGGVIARP</sequence>
<accession>Q89M62</accession>
<feature type="chain" id="PRO_0000249979" description="Anhydro-N-acetylmuramic acid kinase">
    <location>
        <begin position="1"/>
        <end position="367"/>
    </location>
</feature>
<feature type="binding site" evidence="1">
    <location>
        <begin position="11"/>
        <end position="18"/>
    </location>
    <ligand>
        <name>ATP</name>
        <dbReference type="ChEBI" id="CHEBI:30616"/>
    </ligand>
</feature>
<dbReference type="EC" id="2.7.1.170" evidence="1"/>
<dbReference type="EMBL" id="BA000040">
    <property type="protein sequence ID" value="BAC49596.1"/>
    <property type="molecule type" value="Genomic_DNA"/>
</dbReference>
<dbReference type="RefSeq" id="NP_770971.1">
    <property type="nucleotide sequence ID" value="NC_004463.1"/>
</dbReference>
<dbReference type="RefSeq" id="WP_011087104.1">
    <property type="nucleotide sequence ID" value="NC_004463.1"/>
</dbReference>
<dbReference type="SMR" id="Q89M62"/>
<dbReference type="FunCoup" id="Q89M62">
    <property type="interactions" value="83"/>
</dbReference>
<dbReference type="STRING" id="224911.AAV28_18715"/>
<dbReference type="EnsemblBacteria" id="BAC49596">
    <property type="protein sequence ID" value="BAC49596"/>
    <property type="gene ID" value="BAC49596"/>
</dbReference>
<dbReference type="GeneID" id="46491327"/>
<dbReference type="KEGG" id="bja:blr4331"/>
<dbReference type="PATRIC" id="fig|224911.44.peg.4075"/>
<dbReference type="eggNOG" id="COG2377">
    <property type="taxonomic scope" value="Bacteria"/>
</dbReference>
<dbReference type="HOGENOM" id="CLU_038782_3_0_5"/>
<dbReference type="InParanoid" id="Q89M62"/>
<dbReference type="OrthoDB" id="9763949at2"/>
<dbReference type="PhylomeDB" id="Q89M62"/>
<dbReference type="UniPathway" id="UPA00343"/>
<dbReference type="UniPathway" id="UPA00544"/>
<dbReference type="Proteomes" id="UP000002526">
    <property type="component" value="Chromosome"/>
</dbReference>
<dbReference type="GO" id="GO:0005524">
    <property type="term" value="F:ATP binding"/>
    <property type="evidence" value="ECO:0007669"/>
    <property type="project" value="UniProtKB-UniRule"/>
</dbReference>
<dbReference type="GO" id="GO:0016301">
    <property type="term" value="F:kinase activity"/>
    <property type="evidence" value="ECO:0000318"/>
    <property type="project" value="GO_Central"/>
</dbReference>
<dbReference type="GO" id="GO:0016773">
    <property type="term" value="F:phosphotransferase activity, alcohol group as acceptor"/>
    <property type="evidence" value="ECO:0007669"/>
    <property type="project" value="UniProtKB-UniRule"/>
</dbReference>
<dbReference type="GO" id="GO:0097175">
    <property type="term" value="P:1,6-anhydro-N-acetyl-beta-muramic acid catabolic process"/>
    <property type="evidence" value="ECO:0007669"/>
    <property type="project" value="UniProtKB-UniRule"/>
</dbReference>
<dbReference type="GO" id="GO:0006040">
    <property type="term" value="P:amino sugar metabolic process"/>
    <property type="evidence" value="ECO:0007669"/>
    <property type="project" value="InterPro"/>
</dbReference>
<dbReference type="GO" id="GO:0009254">
    <property type="term" value="P:peptidoglycan turnover"/>
    <property type="evidence" value="ECO:0007669"/>
    <property type="project" value="UniProtKB-UniRule"/>
</dbReference>
<dbReference type="Gene3D" id="3.30.420.40">
    <property type="match status" value="2"/>
</dbReference>
<dbReference type="HAMAP" id="MF_01270">
    <property type="entry name" value="AnhMurNAc_kinase"/>
    <property type="match status" value="1"/>
</dbReference>
<dbReference type="InterPro" id="IPR005338">
    <property type="entry name" value="Anhydro_N_Ac-Mur_kinase"/>
</dbReference>
<dbReference type="InterPro" id="IPR043129">
    <property type="entry name" value="ATPase_NBD"/>
</dbReference>
<dbReference type="NCBIfam" id="NF007141">
    <property type="entry name" value="PRK09585.1-5"/>
    <property type="match status" value="1"/>
</dbReference>
<dbReference type="PANTHER" id="PTHR30605">
    <property type="entry name" value="ANHYDRO-N-ACETYLMURAMIC ACID KINASE"/>
    <property type="match status" value="1"/>
</dbReference>
<dbReference type="PANTHER" id="PTHR30605:SF0">
    <property type="entry name" value="ANHYDRO-N-ACETYLMURAMIC ACID KINASE"/>
    <property type="match status" value="1"/>
</dbReference>
<dbReference type="Pfam" id="PF03702">
    <property type="entry name" value="AnmK"/>
    <property type="match status" value="1"/>
</dbReference>
<dbReference type="SUPFAM" id="SSF53067">
    <property type="entry name" value="Actin-like ATPase domain"/>
    <property type="match status" value="1"/>
</dbReference>
<gene>
    <name evidence="1" type="primary">anmK</name>
    <name type="ordered locus">blr4331</name>
</gene>
<protein>
    <recommendedName>
        <fullName evidence="1">Anhydro-N-acetylmuramic acid kinase</fullName>
        <ecNumber evidence="1">2.7.1.170</ecNumber>
    </recommendedName>
    <alternativeName>
        <fullName evidence="1">AnhMurNAc kinase</fullName>
    </alternativeName>
</protein>
<organism>
    <name type="scientific">Bradyrhizobium diazoefficiens (strain JCM 10833 / BCRC 13528 / IAM 13628 / NBRC 14792 / USDA 110)</name>
    <dbReference type="NCBI Taxonomy" id="224911"/>
    <lineage>
        <taxon>Bacteria</taxon>
        <taxon>Pseudomonadati</taxon>
        <taxon>Pseudomonadota</taxon>
        <taxon>Alphaproteobacteria</taxon>
        <taxon>Hyphomicrobiales</taxon>
        <taxon>Nitrobacteraceae</taxon>
        <taxon>Bradyrhizobium</taxon>
    </lineage>
</organism>